<protein>
    <recommendedName>
        <fullName>Transcription initiation factor TFIID subunit 11</fullName>
    </recommendedName>
</protein>
<name>TAF11_DICDI</name>
<organism>
    <name type="scientific">Dictyostelium discoideum</name>
    <name type="common">Social amoeba</name>
    <dbReference type="NCBI Taxonomy" id="44689"/>
    <lineage>
        <taxon>Eukaryota</taxon>
        <taxon>Amoebozoa</taxon>
        <taxon>Evosea</taxon>
        <taxon>Eumycetozoa</taxon>
        <taxon>Dictyostelia</taxon>
        <taxon>Dictyosteliales</taxon>
        <taxon>Dictyosteliaceae</taxon>
        <taxon>Dictyostelium</taxon>
    </lineage>
</organism>
<feature type="chain" id="PRO_0000332743" description="Transcription initiation factor TFIID subunit 11">
    <location>
        <begin position="1"/>
        <end position="450"/>
    </location>
</feature>
<feature type="region of interest" description="Disordered" evidence="2">
    <location>
        <begin position="1"/>
        <end position="329"/>
    </location>
</feature>
<feature type="compositionally biased region" description="Basic and acidic residues" evidence="2">
    <location>
        <begin position="17"/>
        <end position="97"/>
    </location>
</feature>
<feature type="compositionally biased region" description="Low complexity" evidence="2">
    <location>
        <begin position="103"/>
        <end position="117"/>
    </location>
</feature>
<feature type="compositionally biased region" description="Low complexity" evidence="2">
    <location>
        <begin position="126"/>
        <end position="152"/>
    </location>
</feature>
<feature type="compositionally biased region" description="Polar residues" evidence="2">
    <location>
        <begin position="158"/>
        <end position="184"/>
    </location>
</feature>
<feature type="compositionally biased region" description="Acidic residues" evidence="2">
    <location>
        <begin position="192"/>
        <end position="212"/>
    </location>
</feature>
<feature type="compositionally biased region" description="Acidic residues" evidence="2">
    <location>
        <begin position="226"/>
        <end position="243"/>
    </location>
</feature>
<feature type="compositionally biased region" description="Basic residues" evidence="2">
    <location>
        <begin position="249"/>
        <end position="263"/>
    </location>
</feature>
<feature type="compositionally biased region" description="Acidic residues" evidence="2">
    <location>
        <begin position="268"/>
        <end position="329"/>
    </location>
</feature>
<sequence length="450" mass="50210">MSESQPMMDIASPGSTGKEKKTPKAKENKEKKTTTPKEPKVTKTKEPKQPKEPKQTKEPKQPKQSKESKEPKVSKEKKTPATPKEPKDQKDTKEQKPKKLTKKQLAAQQSVTTVAPPLGTPPPPTTATTTTTTATTSTSSTSTSNSQPSTPSILDLPSPSQSTKKQRISTPSTASANKKPTVNKTSKKIEQSEDDESADNDDDEDEDDDDDDNNSKNKKKNNNNNNDEEDEDEDEDEESESDSDFEKSNRKRKKIFQKNKNRGRLQSDDDDEDGSGSGSDEDSDEDSDDSDSDESDSDDSDSDSDSDSDSDSDSDSSEGEGNDDDDDESTFNLSEMQVRENTQMNTLIKHFSEDQQTRFEYYKRSSFQRANIKKVMQSVLSAPVNQTSAIVMGGIAKVFVGEIVELARSIMEEWRETGPIRPRHIREAYRRLKESNSIPYYKKSVPKSMK</sequence>
<dbReference type="EMBL" id="AAFI02000024">
    <property type="protein sequence ID" value="EAL68023.1"/>
    <property type="molecule type" value="Genomic_DNA"/>
</dbReference>
<dbReference type="RefSeq" id="XP_642001.1">
    <property type="nucleotide sequence ID" value="XM_636909.1"/>
</dbReference>
<dbReference type="SMR" id="Q54XM9"/>
<dbReference type="FunCoup" id="Q54XM9">
    <property type="interactions" value="30"/>
</dbReference>
<dbReference type="STRING" id="44689.Q54XM9"/>
<dbReference type="GlyGen" id="Q54XM9">
    <property type="glycosylation" value="2 sites"/>
</dbReference>
<dbReference type="PaxDb" id="44689-DDB0231000"/>
<dbReference type="EnsemblProtists" id="EAL68023">
    <property type="protein sequence ID" value="EAL68023"/>
    <property type="gene ID" value="DDB_G0278843"/>
</dbReference>
<dbReference type="GeneID" id="8621733"/>
<dbReference type="KEGG" id="ddi:DDB_G0278843"/>
<dbReference type="dictyBase" id="DDB_G0278843">
    <property type="gene designation" value="taf11"/>
</dbReference>
<dbReference type="VEuPathDB" id="AmoebaDB:DDB_G0278843"/>
<dbReference type="eggNOG" id="KOG3219">
    <property type="taxonomic scope" value="Eukaryota"/>
</dbReference>
<dbReference type="HOGENOM" id="CLU_608945_0_0_1"/>
<dbReference type="InParanoid" id="Q54XM9"/>
<dbReference type="OMA" id="DRHMASR"/>
<dbReference type="Reactome" id="R-DDI-674695">
    <property type="pathway name" value="RNA Polymerase II Pre-transcription Events"/>
</dbReference>
<dbReference type="Reactome" id="R-DDI-6807505">
    <property type="pathway name" value="RNA polymerase II transcribes snRNA genes"/>
</dbReference>
<dbReference type="Reactome" id="R-DDI-73776">
    <property type="pathway name" value="RNA Polymerase II Promoter Escape"/>
</dbReference>
<dbReference type="Reactome" id="R-DDI-73779">
    <property type="pathway name" value="RNA Polymerase II Transcription Pre-Initiation And Promoter Opening"/>
</dbReference>
<dbReference type="Reactome" id="R-DDI-75953">
    <property type="pathway name" value="RNA Polymerase II Transcription Initiation"/>
</dbReference>
<dbReference type="Reactome" id="R-DDI-76042">
    <property type="pathway name" value="RNA Polymerase II Transcription Initiation And Promoter Clearance"/>
</dbReference>
<dbReference type="PRO" id="PR:Q54XM9"/>
<dbReference type="Proteomes" id="UP000002195">
    <property type="component" value="Chromosome 3"/>
</dbReference>
<dbReference type="GO" id="GO:0005669">
    <property type="term" value="C:transcription factor TFIID complex"/>
    <property type="evidence" value="ECO:0000250"/>
    <property type="project" value="dictyBase"/>
</dbReference>
<dbReference type="GO" id="GO:0046982">
    <property type="term" value="F:protein heterodimerization activity"/>
    <property type="evidence" value="ECO:0007669"/>
    <property type="project" value="InterPro"/>
</dbReference>
<dbReference type="GO" id="GO:0051123">
    <property type="term" value="P:RNA polymerase II preinitiation complex assembly"/>
    <property type="evidence" value="ECO:0000318"/>
    <property type="project" value="GO_Central"/>
</dbReference>
<dbReference type="GO" id="GO:0006367">
    <property type="term" value="P:transcription initiation at RNA polymerase II promoter"/>
    <property type="evidence" value="ECO:0000250"/>
    <property type="project" value="dictyBase"/>
</dbReference>
<dbReference type="CDD" id="cd08048">
    <property type="entry name" value="HFD_TAF11"/>
    <property type="match status" value="1"/>
</dbReference>
<dbReference type="FunFam" id="1.10.20.10:FF:000061">
    <property type="entry name" value="TFIID subunit"/>
    <property type="match status" value="1"/>
</dbReference>
<dbReference type="Gene3D" id="1.10.20.10">
    <property type="entry name" value="Histone, subunit A"/>
    <property type="match status" value="1"/>
</dbReference>
<dbReference type="InterPro" id="IPR009072">
    <property type="entry name" value="Histone-fold"/>
</dbReference>
<dbReference type="InterPro" id="IPR045127">
    <property type="entry name" value="TAF11-like"/>
</dbReference>
<dbReference type="InterPro" id="IPR006809">
    <property type="entry name" value="TAFII28_dom"/>
</dbReference>
<dbReference type="PANTHER" id="PTHR13218:SF8">
    <property type="entry name" value="TRANSCRIPTION INITIATION FACTOR TFIID SUBUNIT 11"/>
    <property type="match status" value="1"/>
</dbReference>
<dbReference type="PANTHER" id="PTHR13218">
    <property type="entry name" value="TRANSCRIPTION INITIATION FACTOR TFIID SUBUNIT 11-RELATED"/>
    <property type="match status" value="1"/>
</dbReference>
<dbReference type="Pfam" id="PF04719">
    <property type="entry name" value="TAFII28"/>
    <property type="match status" value="1"/>
</dbReference>
<dbReference type="SUPFAM" id="SSF47113">
    <property type="entry name" value="Histone-fold"/>
    <property type="match status" value="1"/>
</dbReference>
<proteinExistence type="inferred from homology"/>
<reference key="1">
    <citation type="journal article" date="2005" name="Nature">
        <title>The genome of the social amoeba Dictyostelium discoideum.</title>
        <authorList>
            <person name="Eichinger L."/>
            <person name="Pachebat J.A."/>
            <person name="Gloeckner G."/>
            <person name="Rajandream M.A."/>
            <person name="Sucgang R."/>
            <person name="Berriman M."/>
            <person name="Song J."/>
            <person name="Olsen R."/>
            <person name="Szafranski K."/>
            <person name="Xu Q."/>
            <person name="Tunggal B."/>
            <person name="Kummerfeld S."/>
            <person name="Madera M."/>
            <person name="Konfortov B.A."/>
            <person name="Rivero F."/>
            <person name="Bankier A.T."/>
            <person name="Lehmann R."/>
            <person name="Hamlin N."/>
            <person name="Davies R."/>
            <person name="Gaudet P."/>
            <person name="Fey P."/>
            <person name="Pilcher K."/>
            <person name="Chen G."/>
            <person name="Saunders D."/>
            <person name="Sodergren E.J."/>
            <person name="Davis P."/>
            <person name="Kerhornou A."/>
            <person name="Nie X."/>
            <person name="Hall N."/>
            <person name="Anjard C."/>
            <person name="Hemphill L."/>
            <person name="Bason N."/>
            <person name="Farbrother P."/>
            <person name="Desany B."/>
            <person name="Just E."/>
            <person name="Morio T."/>
            <person name="Rost R."/>
            <person name="Churcher C.M."/>
            <person name="Cooper J."/>
            <person name="Haydock S."/>
            <person name="van Driessche N."/>
            <person name="Cronin A."/>
            <person name="Goodhead I."/>
            <person name="Muzny D.M."/>
            <person name="Mourier T."/>
            <person name="Pain A."/>
            <person name="Lu M."/>
            <person name="Harper D."/>
            <person name="Lindsay R."/>
            <person name="Hauser H."/>
            <person name="James K.D."/>
            <person name="Quiles M."/>
            <person name="Madan Babu M."/>
            <person name="Saito T."/>
            <person name="Buchrieser C."/>
            <person name="Wardroper A."/>
            <person name="Felder M."/>
            <person name="Thangavelu M."/>
            <person name="Johnson D."/>
            <person name="Knights A."/>
            <person name="Loulseged H."/>
            <person name="Mungall K.L."/>
            <person name="Oliver K."/>
            <person name="Price C."/>
            <person name="Quail M.A."/>
            <person name="Urushihara H."/>
            <person name="Hernandez J."/>
            <person name="Rabbinowitsch E."/>
            <person name="Steffen D."/>
            <person name="Sanders M."/>
            <person name="Ma J."/>
            <person name="Kohara Y."/>
            <person name="Sharp S."/>
            <person name="Simmonds M.N."/>
            <person name="Spiegler S."/>
            <person name="Tivey A."/>
            <person name="Sugano S."/>
            <person name="White B."/>
            <person name="Walker D."/>
            <person name="Woodward J.R."/>
            <person name="Winckler T."/>
            <person name="Tanaka Y."/>
            <person name="Shaulsky G."/>
            <person name="Schleicher M."/>
            <person name="Weinstock G.M."/>
            <person name="Rosenthal A."/>
            <person name="Cox E.C."/>
            <person name="Chisholm R.L."/>
            <person name="Gibbs R.A."/>
            <person name="Loomis W.F."/>
            <person name="Platzer M."/>
            <person name="Kay R.R."/>
            <person name="Williams J.G."/>
            <person name="Dear P.H."/>
            <person name="Noegel A.A."/>
            <person name="Barrell B.G."/>
            <person name="Kuspa A."/>
        </authorList>
    </citation>
    <scope>NUCLEOTIDE SEQUENCE [LARGE SCALE GENOMIC DNA]</scope>
    <source>
        <strain>AX4</strain>
    </source>
</reference>
<comment type="function">
    <text evidence="1">TFIID is a multimeric protein complex that plays a central role in mediating promoter responses to various activators and repressors.</text>
</comment>
<comment type="subunit">
    <text evidence="1">Belongs to the TFIID complex which is composed of TATA binding protein (Tbp) and a number of TBP-associated factors (TAFs).</text>
</comment>
<comment type="subcellular location">
    <subcellularLocation>
        <location evidence="1">Nucleus</location>
    </subcellularLocation>
</comment>
<comment type="similarity">
    <text evidence="3">Belongs to the TAF11 family.</text>
</comment>
<accession>Q54XM9</accession>
<gene>
    <name type="primary">taf11</name>
    <name type="ORF">DDB_G0278843</name>
</gene>
<evidence type="ECO:0000250" key="1"/>
<evidence type="ECO:0000256" key="2">
    <source>
        <dbReference type="SAM" id="MobiDB-lite"/>
    </source>
</evidence>
<evidence type="ECO:0000305" key="3"/>
<keyword id="KW-0539">Nucleus</keyword>
<keyword id="KW-1185">Reference proteome</keyword>
<keyword id="KW-0804">Transcription</keyword>
<keyword id="KW-0805">Transcription regulation</keyword>